<sequence>MRLPIFLDTDPGIDDAVAIAAAIFAPELDLQLMTTVAGNVSVEKTTRNALQLLHFWNAEIPLAQGAAVPLVRAPRDAASVHGESGMAGYDFVEHNRKPLGIPAFLAIRDALMRAPEPVTLVAIGPLTNIALLLSQCPECKPYIRRLVIMGGSAGRGNCTPNAEFNIAADPEAAACVFRSGIEIVMCGLDVTNQAILTPDYLATLPELNRTGKMLHALFSHYRSGSMQSGLRMHDLCAIAWLVRPDLFTLKPCFVAVETQGEFTSGTTVVDIDGCLGKPANVQVALDLNVKGFQQWVAEVLALVP</sequence>
<reference key="1">
    <citation type="journal article" date="2009" name="PLoS Genet.">
        <title>Organised genome dynamics in the Escherichia coli species results in highly diverse adaptive paths.</title>
        <authorList>
            <person name="Touchon M."/>
            <person name="Hoede C."/>
            <person name="Tenaillon O."/>
            <person name="Barbe V."/>
            <person name="Baeriswyl S."/>
            <person name="Bidet P."/>
            <person name="Bingen E."/>
            <person name="Bonacorsi S."/>
            <person name="Bouchier C."/>
            <person name="Bouvet O."/>
            <person name="Calteau A."/>
            <person name="Chiapello H."/>
            <person name="Clermont O."/>
            <person name="Cruveiller S."/>
            <person name="Danchin A."/>
            <person name="Diard M."/>
            <person name="Dossat C."/>
            <person name="Karoui M.E."/>
            <person name="Frapy E."/>
            <person name="Garry L."/>
            <person name="Ghigo J.M."/>
            <person name="Gilles A.M."/>
            <person name="Johnson J."/>
            <person name="Le Bouguenec C."/>
            <person name="Lescat M."/>
            <person name="Mangenot S."/>
            <person name="Martinez-Jehanne V."/>
            <person name="Matic I."/>
            <person name="Nassif X."/>
            <person name="Oztas S."/>
            <person name="Petit M.A."/>
            <person name="Pichon C."/>
            <person name="Rouy Z."/>
            <person name="Ruf C.S."/>
            <person name="Schneider D."/>
            <person name="Tourret J."/>
            <person name="Vacherie B."/>
            <person name="Vallenet D."/>
            <person name="Medigue C."/>
            <person name="Rocha E.P.C."/>
            <person name="Denamur E."/>
        </authorList>
    </citation>
    <scope>NUCLEOTIDE SEQUENCE [LARGE SCALE GENOMIC DNA]</scope>
    <source>
        <strain>UMN026 / ExPEC</strain>
    </source>
</reference>
<keyword id="KW-0326">Glycosidase</keyword>
<keyword id="KW-0378">Hydrolase</keyword>
<comment type="function">
    <text evidence="1">Hydrolyzes both purine and pyrimidine ribonucleosides with a broad-substrate specificity.</text>
</comment>
<comment type="similarity">
    <text evidence="1">Belongs to the IUNH family. RihC subfamily.</text>
</comment>
<gene>
    <name evidence="1" type="primary">rihC</name>
    <name type="ordered locus">ECUMN_0031</name>
</gene>
<name>RIHC_ECOLU</name>
<feature type="chain" id="PRO_1000145813" description="Non-specific ribonucleoside hydrolase RihC">
    <location>
        <begin position="1"/>
        <end position="304"/>
    </location>
</feature>
<feature type="active site" evidence="1">
    <location>
        <position position="233"/>
    </location>
</feature>
<protein>
    <recommendedName>
        <fullName evidence="1">Non-specific ribonucleoside hydrolase RihC</fullName>
        <ecNumber evidence="1">3.2.-.-</ecNumber>
    </recommendedName>
    <alternativeName>
        <fullName evidence="1">Purine/pyrimidine ribonucleoside hydrolase</fullName>
    </alternativeName>
</protein>
<evidence type="ECO:0000255" key="1">
    <source>
        <dbReference type="HAMAP-Rule" id="MF_01432"/>
    </source>
</evidence>
<proteinExistence type="inferred from homology"/>
<accession>B7N7Q4</accession>
<dbReference type="EC" id="3.2.-.-" evidence="1"/>
<dbReference type="EMBL" id="CU928163">
    <property type="protein sequence ID" value="CAR11254.1"/>
    <property type="molecule type" value="Genomic_DNA"/>
</dbReference>
<dbReference type="RefSeq" id="WP_001239137.1">
    <property type="nucleotide sequence ID" value="NC_011751.1"/>
</dbReference>
<dbReference type="RefSeq" id="YP_002410809.1">
    <property type="nucleotide sequence ID" value="NC_011751.1"/>
</dbReference>
<dbReference type="SMR" id="B7N7Q4"/>
<dbReference type="STRING" id="585056.ECUMN_0031"/>
<dbReference type="KEGG" id="eum:ECUMN_0031"/>
<dbReference type="PATRIC" id="fig|585056.7.peg.214"/>
<dbReference type="HOGENOM" id="CLU_036838_2_2_6"/>
<dbReference type="Proteomes" id="UP000007097">
    <property type="component" value="Chromosome"/>
</dbReference>
<dbReference type="GO" id="GO:0005829">
    <property type="term" value="C:cytosol"/>
    <property type="evidence" value="ECO:0007669"/>
    <property type="project" value="TreeGrafter"/>
</dbReference>
<dbReference type="GO" id="GO:0008477">
    <property type="term" value="F:purine nucleosidase activity"/>
    <property type="evidence" value="ECO:0007669"/>
    <property type="project" value="TreeGrafter"/>
</dbReference>
<dbReference type="GO" id="GO:0045437">
    <property type="term" value="F:uridine nucleosidase activity"/>
    <property type="evidence" value="ECO:0007669"/>
    <property type="project" value="UniProtKB-ARBA"/>
</dbReference>
<dbReference type="GO" id="GO:0006144">
    <property type="term" value="P:purine nucleobase metabolic process"/>
    <property type="evidence" value="ECO:0007669"/>
    <property type="project" value="UniProtKB-UniRule"/>
</dbReference>
<dbReference type="GO" id="GO:0006152">
    <property type="term" value="P:purine nucleoside catabolic process"/>
    <property type="evidence" value="ECO:0007669"/>
    <property type="project" value="TreeGrafter"/>
</dbReference>
<dbReference type="GO" id="GO:0006206">
    <property type="term" value="P:pyrimidine nucleobase metabolic process"/>
    <property type="evidence" value="ECO:0007669"/>
    <property type="project" value="UniProtKB-UniRule"/>
</dbReference>
<dbReference type="CDD" id="cd02651">
    <property type="entry name" value="nuc_hydro_IU_UC_XIUA"/>
    <property type="match status" value="1"/>
</dbReference>
<dbReference type="FunFam" id="3.90.245.10:FF:000002">
    <property type="entry name" value="Non-specific ribonucleoside hydrolase RihC"/>
    <property type="match status" value="1"/>
</dbReference>
<dbReference type="Gene3D" id="3.90.245.10">
    <property type="entry name" value="Ribonucleoside hydrolase-like"/>
    <property type="match status" value="1"/>
</dbReference>
<dbReference type="HAMAP" id="MF_01432">
    <property type="entry name" value="Nucleosid_hydro_RihC"/>
    <property type="match status" value="1"/>
</dbReference>
<dbReference type="InterPro" id="IPR015910">
    <property type="entry name" value="I/U_nuclsd_hydro_CS"/>
</dbReference>
<dbReference type="InterPro" id="IPR001910">
    <property type="entry name" value="Inosine/uridine_hydrolase_dom"/>
</dbReference>
<dbReference type="InterPro" id="IPR023186">
    <property type="entry name" value="IUNH"/>
</dbReference>
<dbReference type="InterPro" id="IPR022976">
    <property type="entry name" value="Nucleosid_hydro_RihC_nonspecif"/>
</dbReference>
<dbReference type="InterPro" id="IPR036452">
    <property type="entry name" value="Ribo_hydro-like"/>
</dbReference>
<dbReference type="NCBIfam" id="NF008036">
    <property type="entry name" value="PRK10768.1"/>
    <property type="match status" value="1"/>
</dbReference>
<dbReference type="PANTHER" id="PTHR12304">
    <property type="entry name" value="INOSINE-URIDINE PREFERRING NUCLEOSIDE HYDROLASE"/>
    <property type="match status" value="1"/>
</dbReference>
<dbReference type="PANTHER" id="PTHR12304:SF15">
    <property type="entry name" value="NON-SPECIFIC RIBONUCLEOSIDE HYDROLASE RIHC"/>
    <property type="match status" value="1"/>
</dbReference>
<dbReference type="Pfam" id="PF01156">
    <property type="entry name" value="IU_nuc_hydro"/>
    <property type="match status" value="1"/>
</dbReference>
<dbReference type="SUPFAM" id="SSF53590">
    <property type="entry name" value="Nucleoside hydrolase"/>
    <property type="match status" value="1"/>
</dbReference>
<dbReference type="PROSITE" id="PS01247">
    <property type="entry name" value="IUNH"/>
    <property type="match status" value="1"/>
</dbReference>
<organism>
    <name type="scientific">Escherichia coli O17:K52:H18 (strain UMN026 / ExPEC)</name>
    <dbReference type="NCBI Taxonomy" id="585056"/>
    <lineage>
        <taxon>Bacteria</taxon>
        <taxon>Pseudomonadati</taxon>
        <taxon>Pseudomonadota</taxon>
        <taxon>Gammaproteobacteria</taxon>
        <taxon>Enterobacterales</taxon>
        <taxon>Enterobacteriaceae</taxon>
        <taxon>Escherichia</taxon>
    </lineage>
</organism>